<organism>
    <name type="scientific">Staphylococcus aureus (strain Newman)</name>
    <dbReference type="NCBI Taxonomy" id="426430"/>
    <lineage>
        <taxon>Bacteria</taxon>
        <taxon>Bacillati</taxon>
        <taxon>Bacillota</taxon>
        <taxon>Bacilli</taxon>
        <taxon>Bacillales</taxon>
        <taxon>Staphylococcaceae</taxon>
        <taxon>Staphylococcus</taxon>
    </lineage>
</organism>
<reference key="1">
    <citation type="journal article" date="2008" name="J. Bacteriol.">
        <title>Genome sequence of Staphylococcus aureus strain Newman and comparative analysis of staphylococcal genomes: polymorphism and evolution of two major pathogenicity islands.</title>
        <authorList>
            <person name="Baba T."/>
            <person name="Bae T."/>
            <person name="Schneewind O."/>
            <person name="Takeuchi F."/>
            <person name="Hiramatsu K."/>
        </authorList>
    </citation>
    <scope>NUCLEOTIDE SEQUENCE [LARGE SCALE GENOMIC DNA]</scope>
    <source>
        <strain>Newman</strain>
    </source>
</reference>
<name>CLPP_STAAE</name>
<protein>
    <recommendedName>
        <fullName evidence="1">ATP-dependent Clp protease proteolytic subunit</fullName>
        <ecNumber evidence="1">3.4.21.92</ecNumber>
    </recommendedName>
    <alternativeName>
        <fullName evidence="1">Endopeptidase Clp</fullName>
    </alternativeName>
</protein>
<keyword id="KW-0963">Cytoplasm</keyword>
<keyword id="KW-0378">Hydrolase</keyword>
<keyword id="KW-0645">Protease</keyword>
<keyword id="KW-0720">Serine protease</keyword>
<comment type="function">
    <text evidence="1">Cleaves peptides in various proteins in a process that requires ATP hydrolysis. Has a chymotrypsin-like activity. Plays a major role in the degradation of misfolded proteins.</text>
</comment>
<comment type="catalytic activity">
    <reaction evidence="1">
        <text>Hydrolysis of proteins to small peptides in the presence of ATP and magnesium. alpha-casein is the usual test substrate. In the absence of ATP, only oligopeptides shorter than five residues are hydrolyzed (such as succinyl-Leu-Tyr-|-NHMec, and Leu-Tyr-Leu-|-Tyr-Trp, in which cleavage of the -Tyr-|-Leu- and -Tyr-|-Trp bonds also occurs).</text>
        <dbReference type="EC" id="3.4.21.92"/>
    </reaction>
</comment>
<comment type="subunit">
    <text evidence="1">Fourteen ClpP subunits assemble into 2 heptameric rings which stack back to back to give a disk-like structure with a central cavity, resembling the structure of eukaryotic proteasomes.</text>
</comment>
<comment type="subcellular location">
    <subcellularLocation>
        <location evidence="1">Cytoplasm</location>
    </subcellularLocation>
</comment>
<comment type="similarity">
    <text evidence="1">Belongs to the peptidase S14 family.</text>
</comment>
<dbReference type="EC" id="3.4.21.92" evidence="1"/>
<dbReference type="EMBL" id="AP009351">
    <property type="protein sequence ID" value="BAF67008.1"/>
    <property type="molecule type" value="Genomic_DNA"/>
</dbReference>
<dbReference type="RefSeq" id="WP_001049165.1">
    <property type="nucleotide sequence ID" value="NZ_JBBIAE010000002.1"/>
</dbReference>
<dbReference type="EMDB" id="EMD-7952"/>
<dbReference type="SMR" id="A6QF76"/>
<dbReference type="MEROPS" id="S14.001"/>
<dbReference type="GeneID" id="98345115"/>
<dbReference type="KEGG" id="sae:NWMN_0736"/>
<dbReference type="HOGENOM" id="CLU_058707_3_2_9"/>
<dbReference type="Proteomes" id="UP000006386">
    <property type="component" value="Chromosome"/>
</dbReference>
<dbReference type="GO" id="GO:0005737">
    <property type="term" value="C:cytoplasm"/>
    <property type="evidence" value="ECO:0007669"/>
    <property type="project" value="UniProtKB-SubCell"/>
</dbReference>
<dbReference type="GO" id="GO:0009368">
    <property type="term" value="C:endopeptidase Clp complex"/>
    <property type="evidence" value="ECO:0007669"/>
    <property type="project" value="TreeGrafter"/>
</dbReference>
<dbReference type="GO" id="GO:0004176">
    <property type="term" value="F:ATP-dependent peptidase activity"/>
    <property type="evidence" value="ECO:0007669"/>
    <property type="project" value="InterPro"/>
</dbReference>
<dbReference type="GO" id="GO:0051117">
    <property type="term" value="F:ATPase binding"/>
    <property type="evidence" value="ECO:0007669"/>
    <property type="project" value="TreeGrafter"/>
</dbReference>
<dbReference type="GO" id="GO:0004252">
    <property type="term" value="F:serine-type endopeptidase activity"/>
    <property type="evidence" value="ECO:0007669"/>
    <property type="project" value="UniProtKB-UniRule"/>
</dbReference>
<dbReference type="GO" id="GO:0006515">
    <property type="term" value="P:protein quality control for misfolded or incompletely synthesized proteins"/>
    <property type="evidence" value="ECO:0007669"/>
    <property type="project" value="TreeGrafter"/>
</dbReference>
<dbReference type="CDD" id="cd07017">
    <property type="entry name" value="S14_ClpP_2"/>
    <property type="match status" value="1"/>
</dbReference>
<dbReference type="FunFam" id="3.90.226.10:FF:000001">
    <property type="entry name" value="ATP-dependent Clp protease proteolytic subunit"/>
    <property type="match status" value="1"/>
</dbReference>
<dbReference type="Gene3D" id="3.90.226.10">
    <property type="entry name" value="2-enoyl-CoA Hydratase, Chain A, domain 1"/>
    <property type="match status" value="1"/>
</dbReference>
<dbReference type="HAMAP" id="MF_00444">
    <property type="entry name" value="ClpP"/>
    <property type="match status" value="1"/>
</dbReference>
<dbReference type="InterPro" id="IPR001907">
    <property type="entry name" value="ClpP"/>
</dbReference>
<dbReference type="InterPro" id="IPR029045">
    <property type="entry name" value="ClpP/crotonase-like_dom_sf"/>
</dbReference>
<dbReference type="InterPro" id="IPR023562">
    <property type="entry name" value="ClpP/TepA"/>
</dbReference>
<dbReference type="InterPro" id="IPR033135">
    <property type="entry name" value="ClpP_His_AS"/>
</dbReference>
<dbReference type="InterPro" id="IPR018215">
    <property type="entry name" value="ClpP_Ser_AS"/>
</dbReference>
<dbReference type="NCBIfam" id="TIGR00493">
    <property type="entry name" value="clpP"/>
    <property type="match status" value="1"/>
</dbReference>
<dbReference type="NCBIfam" id="NF001368">
    <property type="entry name" value="PRK00277.1"/>
    <property type="match status" value="1"/>
</dbReference>
<dbReference type="NCBIfam" id="NF009205">
    <property type="entry name" value="PRK12553.1"/>
    <property type="match status" value="1"/>
</dbReference>
<dbReference type="PANTHER" id="PTHR10381">
    <property type="entry name" value="ATP-DEPENDENT CLP PROTEASE PROTEOLYTIC SUBUNIT"/>
    <property type="match status" value="1"/>
</dbReference>
<dbReference type="PANTHER" id="PTHR10381:SF70">
    <property type="entry name" value="ATP-DEPENDENT CLP PROTEASE PROTEOLYTIC SUBUNIT"/>
    <property type="match status" value="1"/>
</dbReference>
<dbReference type="Pfam" id="PF00574">
    <property type="entry name" value="CLP_protease"/>
    <property type="match status" value="1"/>
</dbReference>
<dbReference type="PRINTS" id="PR00127">
    <property type="entry name" value="CLPPROTEASEP"/>
</dbReference>
<dbReference type="SUPFAM" id="SSF52096">
    <property type="entry name" value="ClpP/crotonase"/>
    <property type="match status" value="1"/>
</dbReference>
<dbReference type="PROSITE" id="PS00382">
    <property type="entry name" value="CLP_PROTEASE_HIS"/>
    <property type="match status" value="1"/>
</dbReference>
<dbReference type="PROSITE" id="PS00381">
    <property type="entry name" value="CLP_PROTEASE_SER"/>
    <property type="match status" value="1"/>
</dbReference>
<sequence>MNLIPTVIETTNRGERAYDIYSRLLKDRIIMLGSQIDDNVANSIVSQLLFLQAQDSEKDIYLYINSPGGSVTAGFAIYDTIQHIKPDVQTICIGMAASMGSFLLAAGAKGKRFALPNAEVMIHQPLGGAQGQATEIEIAANHILKTREKLNRILSERTGQSIEKIQKDTDRDNFLTAEEAKEYGLIDEVMVPETK</sequence>
<accession>A6QF76</accession>
<proteinExistence type="inferred from homology"/>
<feature type="chain" id="PRO_1000072347" description="ATP-dependent Clp protease proteolytic subunit">
    <location>
        <begin position="1"/>
        <end position="195"/>
    </location>
</feature>
<feature type="active site" description="Nucleophile" evidence="1">
    <location>
        <position position="98"/>
    </location>
</feature>
<feature type="active site" evidence="1">
    <location>
        <position position="123"/>
    </location>
</feature>
<gene>
    <name evidence="1" type="primary">clpP</name>
    <name type="ordered locus">NWMN_0736</name>
</gene>
<evidence type="ECO:0000255" key="1">
    <source>
        <dbReference type="HAMAP-Rule" id="MF_00444"/>
    </source>
</evidence>